<accession>B0TJA9</accession>
<protein>
    <recommendedName>
        <fullName evidence="1">Isoleucine--tRNA ligase</fullName>
        <ecNumber evidence="1">6.1.1.5</ecNumber>
    </recommendedName>
    <alternativeName>
        <fullName evidence="1">Isoleucyl-tRNA synthetase</fullName>
        <shortName evidence="1">IleRS</shortName>
    </alternativeName>
</protein>
<keyword id="KW-0030">Aminoacyl-tRNA synthetase</keyword>
<keyword id="KW-0067">ATP-binding</keyword>
<keyword id="KW-0963">Cytoplasm</keyword>
<keyword id="KW-0436">Ligase</keyword>
<keyword id="KW-0479">Metal-binding</keyword>
<keyword id="KW-0547">Nucleotide-binding</keyword>
<keyword id="KW-0648">Protein biosynthesis</keyword>
<keyword id="KW-0862">Zinc</keyword>
<organism>
    <name type="scientific">Shewanella halifaxensis (strain HAW-EB4)</name>
    <dbReference type="NCBI Taxonomy" id="458817"/>
    <lineage>
        <taxon>Bacteria</taxon>
        <taxon>Pseudomonadati</taxon>
        <taxon>Pseudomonadota</taxon>
        <taxon>Gammaproteobacteria</taxon>
        <taxon>Alteromonadales</taxon>
        <taxon>Shewanellaceae</taxon>
        <taxon>Shewanella</taxon>
    </lineage>
</organism>
<comment type="function">
    <text evidence="1">Catalyzes the attachment of isoleucine to tRNA(Ile). As IleRS can inadvertently accommodate and process structurally similar amino acids such as valine, to avoid such errors it has two additional distinct tRNA(Ile)-dependent editing activities. One activity is designated as 'pretransfer' editing and involves the hydrolysis of activated Val-AMP. The other activity is designated 'posttransfer' editing and involves deacylation of mischarged Val-tRNA(Ile).</text>
</comment>
<comment type="catalytic activity">
    <reaction evidence="1">
        <text>tRNA(Ile) + L-isoleucine + ATP = L-isoleucyl-tRNA(Ile) + AMP + diphosphate</text>
        <dbReference type="Rhea" id="RHEA:11060"/>
        <dbReference type="Rhea" id="RHEA-COMP:9666"/>
        <dbReference type="Rhea" id="RHEA-COMP:9695"/>
        <dbReference type="ChEBI" id="CHEBI:30616"/>
        <dbReference type="ChEBI" id="CHEBI:33019"/>
        <dbReference type="ChEBI" id="CHEBI:58045"/>
        <dbReference type="ChEBI" id="CHEBI:78442"/>
        <dbReference type="ChEBI" id="CHEBI:78528"/>
        <dbReference type="ChEBI" id="CHEBI:456215"/>
        <dbReference type="EC" id="6.1.1.5"/>
    </reaction>
</comment>
<comment type="cofactor">
    <cofactor evidence="1">
        <name>Zn(2+)</name>
        <dbReference type="ChEBI" id="CHEBI:29105"/>
    </cofactor>
    <text evidence="1">Binds 1 zinc ion per subunit.</text>
</comment>
<comment type="subunit">
    <text evidence="1">Monomer.</text>
</comment>
<comment type="subcellular location">
    <subcellularLocation>
        <location evidence="1">Cytoplasm</location>
    </subcellularLocation>
</comment>
<comment type="domain">
    <text evidence="1">IleRS has two distinct active sites: one for aminoacylation and one for editing. The misactivated valine is translocated from the active site to the editing site, which sterically excludes the correctly activated isoleucine. The single editing site contains two valyl binding pockets, one specific for each substrate (Val-AMP or Val-tRNA(Ile)).</text>
</comment>
<comment type="similarity">
    <text evidence="1">Belongs to the class-I aminoacyl-tRNA synthetase family. IleS type 1 subfamily.</text>
</comment>
<feature type="chain" id="PRO_1000088554" description="Isoleucine--tRNA ligase">
    <location>
        <begin position="1"/>
        <end position="940"/>
    </location>
</feature>
<feature type="short sequence motif" description="'HIGH' region">
    <location>
        <begin position="58"/>
        <end position="68"/>
    </location>
</feature>
<feature type="short sequence motif" description="'KMSKS' region">
    <location>
        <begin position="605"/>
        <end position="609"/>
    </location>
</feature>
<feature type="binding site" evidence="1">
    <location>
        <position position="564"/>
    </location>
    <ligand>
        <name>L-isoleucyl-5'-AMP</name>
        <dbReference type="ChEBI" id="CHEBI:178002"/>
    </ligand>
</feature>
<feature type="binding site" evidence="1">
    <location>
        <position position="608"/>
    </location>
    <ligand>
        <name>ATP</name>
        <dbReference type="ChEBI" id="CHEBI:30616"/>
    </ligand>
</feature>
<feature type="binding site" evidence="1">
    <location>
        <position position="903"/>
    </location>
    <ligand>
        <name>Zn(2+)</name>
        <dbReference type="ChEBI" id="CHEBI:29105"/>
    </ligand>
</feature>
<feature type="binding site" evidence="1">
    <location>
        <position position="906"/>
    </location>
    <ligand>
        <name>Zn(2+)</name>
        <dbReference type="ChEBI" id="CHEBI:29105"/>
    </ligand>
</feature>
<feature type="binding site" evidence="1">
    <location>
        <position position="923"/>
    </location>
    <ligand>
        <name>Zn(2+)</name>
        <dbReference type="ChEBI" id="CHEBI:29105"/>
    </ligand>
</feature>
<feature type="binding site" evidence="1">
    <location>
        <position position="926"/>
    </location>
    <ligand>
        <name>Zn(2+)</name>
        <dbReference type="ChEBI" id="CHEBI:29105"/>
    </ligand>
</feature>
<evidence type="ECO:0000255" key="1">
    <source>
        <dbReference type="HAMAP-Rule" id="MF_02002"/>
    </source>
</evidence>
<reference key="1">
    <citation type="submission" date="2008-01" db="EMBL/GenBank/DDBJ databases">
        <title>Complete sequence of Shewanella halifaxensis HAW-EB4.</title>
        <authorList>
            <consortium name="US DOE Joint Genome Institute"/>
            <person name="Copeland A."/>
            <person name="Lucas S."/>
            <person name="Lapidus A."/>
            <person name="Glavina del Rio T."/>
            <person name="Dalin E."/>
            <person name="Tice H."/>
            <person name="Bruce D."/>
            <person name="Goodwin L."/>
            <person name="Pitluck S."/>
            <person name="Sims D."/>
            <person name="Brettin T."/>
            <person name="Detter J.C."/>
            <person name="Han C."/>
            <person name="Kuske C.R."/>
            <person name="Schmutz J."/>
            <person name="Larimer F."/>
            <person name="Land M."/>
            <person name="Hauser L."/>
            <person name="Kyrpides N."/>
            <person name="Kim E."/>
            <person name="Zhao J.-S."/>
            <person name="Richardson P."/>
        </authorList>
    </citation>
    <scope>NUCLEOTIDE SEQUENCE [LARGE SCALE GENOMIC DNA]</scope>
    <source>
        <strain>HAW-EB4</strain>
    </source>
</reference>
<dbReference type="EC" id="6.1.1.5" evidence="1"/>
<dbReference type="EMBL" id="CP000931">
    <property type="protein sequence ID" value="ABZ75700.1"/>
    <property type="molecule type" value="Genomic_DNA"/>
</dbReference>
<dbReference type="RefSeq" id="WP_012276244.1">
    <property type="nucleotide sequence ID" value="NC_010334.1"/>
</dbReference>
<dbReference type="SMR" id="B0TJA9"/>
<dbReference type="STRING" id="458817.Shal_1131"/>
<dbReference type="KEGG" id="shl:Shal_1131"/>
<dbReference type="eggNOG" id="COG0060">
    <property type="taxonomic scope" value="Bacteria"/>
</dbReference>
<dbReference type="HOGENOM" id="CLU_001493_7_0_6"/>
<dbReference type="OrthoDB" id="9810365at2"/>
<dbReference type="Proteomes" id="UP000001317">
    <property type="component" value="Chromosome"/>
</dbReference>
<dbReference type="GO" id="GO:0005829">
    <property type="term" value="C:cytosol"/>
    <property type="evidence" value="ECO:0007669"/>
    <property type="project" value="TreeGrafter"/>
</dbReference>
<dbReference type="GO" id="GO:0002161">
    <property type="term" value="F:aminoacyl-tRNA deacylase activity"/>
    <property type="evidence" value="ECO:0007669"/>
    <property type="project" value="InterPro"/>
</dbReference>
<dbReference type="GO" id="GO:0005524">
    <property type="term" value="F:ATP binding"/>
    <property type="evidence" value="ECO:0007669"/>
    <property type="project" value="UniProtKB-UniRule"/>
</dbReference>
<dbReference type="GO" id="GO:0004822">
    <property type="term" value="F:isoleucine-tRNA ligase activity"/>
    <property type="evidence" value="ECO:0007669"/>
    <property type="project" value="UniProtKB-UniRule"/>
</dbReference>
<dbReference type="GO" id="GO:0000049">
    <property type="term" value="F:tRNA binding"/>
    <property type="evidence" value="ECO:0007669"/>
    <property type="project" value="InterPro"/>
</dbReference>
<dbReference type="GO" id="GO:0008270">
    <property type="term" value="F:zinc ion binding"/>
    <property type="evidence" value="ECO:0007669"/>
    <property type="project" value="UniProtKB-UniRule"/>
</dbReference>
<dbReference type="GO" id="GO:0006428">
    <property type="term" value="P:isoleucyl-tRNA aminoacylation"/>
    <property type="evidence" value="ECO:0007669"/>
    <property type="project" value="UniProtKB-UniRule"/>
</dbReference>
<dbReference type="CDD" id="cd07960">
    <property type="entry name" value="Anticodon_Ia_Ile_BEm"/>
    <property type="match status" value="1"/>
</dbReference>
<dbReference type="CDD" id="cd00818">
    <property type="entry name" value="IleRS_core"/>
    <property type="match status" value="1"/>
</dbReference>
<dbReference type="FunFam" id="1.10.730.20:FF:000001">
    <property type="entry name" value="Isoleucine--tRNA ligase"/>
    <property type="match status" value="1"/>
</dbReference>
<dbReference type="FunFam" id="3.40.50.620:FF:000042">
    <property type="entry name" value="Isoleucine--tRNA ligase"/>
    <property type="match status" value="1"/>
</dbReference>
<dbReference type="FunFam" id="3.40.50.620:FF:000048">
    <property type="entry name" value="Isoleucine--tRNA ligase"/>
    <property type="match status" value="1"/>
</dbReference>
<dbReference type="Gene3D" id="1.10.730.20">
    <property type="match status" value="1"/>
</dbReference>
<dbReference type="Gene3D" id="3.40.50.620">
    <property type="entry name" value="HUPs"/>
    <property type="match status" value="2"/>
</dbReference>
<dbReference type="Gene3D" id="3.90.740.10">
    <property type="entry name" value="Valyl/Leucyl/Isoleucyl-tRNA synthetase, editing domain"/>
    <property type="match status" value="1"/>
</dbReference>
<dbReference type="HAMAP" id="MF_02002">
    <property type="entry name" value="Ile_tRNA_synth_type1"/>
    <property type="match status" value="1"/>
</dbReference>
<dbReference type="InterPro" id="IPR001412">
    <property type="entry name" value="aa-tRNA-synth_I_CS"/>
</dbReference>
<dbReference type="InterPro" id="IPR002300">
    <property type="entry name" value="aa-tRNA-synth_Ia"/>
</dbReference>
<dbReference type="InterPro" id="IPR033708">
    <property type="entry name" value="Anticodon_Ile_BEm"/>
</dbReference>
<dbReference type="InterPro" id="IPR002301">
    <property type="entry name" value="Ile-tRNA-ligase"/>
</dbReference>
<dbReference type="InterPro" id="IPR023585">
    <property type="entry name" value="Ile-tRNA-ligase_type1"/>
</dbReference>
<dbReference type="InterPro" id="IPR050081">
    <property type="entry name" value="Ile-tRNA_ligase"/>
</dbReference>
<dbReference type="InterPro" id="IPR013155">
    <property type="entry name" value="M/V/L/I-tRNA-synth_anticd-bd"/>
</dbReference>
<dbReference type="InterPro" id="IPR014729">
    <property type="entry name" value="Rossmann-like_a/b/a_fold"/>
</dbReference>
<dbReference type="InterPro" id="IPR009080">
    <property type="entry name" value="tRNAsynth_Ia_anticodon-bd"/>
</dbReference>
<dbReference type="InterPro" id="IPR009008">
    <property type="entry name" value="Val/Leu/Ile-tRNA-synth_edit"/>
</dbReference>
<dbReference type="InterPro" id="IPR010663">
    <property type="entry name" value="Znf_FPG/IleRS"/>
</dbReference>
<dbReference type="NCBIfam" id="TIGR00392">
    <property type="entry name" value="ileS"/>
    <property type="match status" value="1"/>
</dbReference>
<dbReference type="PANTHER" id="PTHR42765:SF1">
    <property type="entry name" value="ISOLEUCINE--TRNA LIGASE, MITOCHONDRIAL"/>
    <property type="match status" value="1"/>
</dbReference>
<dbReference type="PANTHER" id="PTHR42765">
    <property type="entry name" value="SOLEUCYL-TRNA SYNTHETASE"/>
    <property type="match status" value="1"/>
</dbReference>
<dbReference type="Pfam" id="PF08264">
    <property type="entry name" value="Anticodon_1"/>
    <property type="match status" value="1"/>
</dbReference>
<dbReference type="Pfam" id="PF00133">
    <property type="entry name" value="tRNA-synt_1"/>
    <property type="match status" value="1"/>
</dbReference>
<dbReference type="Pfam" id="PF06827">
    <property type="entry name" value="zf-FPG_IleRS"/>
    <property type="match status" value="1"/>
</dbReference>
<dbReference type="PRINTS" id="PR00984">
    <property type="entry name" value="TRNASYNTHILE"/>
</dbReference>
<dbReference type="SUPFAM" id="SSF47323">
    <property type="entry name" value="Anticodon-binding domain of a subclass of class I aminoacyl-tRNA synthetases"/>
    <property type="match status" value="1"/>
</dbReference>
<dbReference type="SUPFAM" id="SSF52374">
    <property type="entry name" value="Nucleotidylyl transferase"/>
    <property type="match status" value="1"/>
</dbReference>
<dbReference type="SUPFAM" id="SSF50677">
    <property type="entry name" value="ValRS/IleRS/LeuRS editing domain"/>
    <property type="match status" value="1"/>
</dbReference>
<dbReference type="PROSITE" id="PS00178">
    <property type="entry name" value="AA_TRNA_LIGASE_I"/>
    <property type="match status" value="1"/>
</dbReference>
<proteinExistence type="inferred from homology"/>
<gene>
    <name evidence="1" type="primary">ileS</name>
    <name type="ordered locus">Shal_1131</name>
</gene>
<sequence>MSDYKSTLNLPETEFPMRGNLANREPEMLKSWNENGLYQQIRESRKDAKPFILHDGPPYANGDIHIGHSVNKILKDIIIKSKTMSGFDAPYIPGWDCHGLPIELKVEQKVGKPGHKVTAAEFRQKCREYAAKQVDGQREDFIRLGVFADWQNPYLTMDFSTEANIVRSLSKVIENGHLHKGVKPVHWCTDCGSALAEAEVEYEDKMSPAIDVAFTAVDKSALLAKFGLADYAHNISMVIWTTTPWTLPANRALAVAANVEYTLVEMVKDGQTQALVLATDLYESCIERFGAESHTVLGTVAGSDLELLRFNHPFYDFDVPVILGDHVTVDSGTGVVHTAPGHGQDDFVVGQKYGLEVANPVGDNGVYKPDTEIFAGLHVFKANKNVVELLEEKGALLSHVQIKHSYPHCWRHKTPIIFRATPQWFISMDQKGLRTQAISEIEQTKWIPDWGQSRIEKMVENRPDWCISRQRTWGVPITLFVHRETEELHPDSVSLMERVAARIEQQGIQAWWDLDASELLGDEADQYRKVTDTLDVWYDSGSTFSTVVAARPEFHGHDIDLYLEGSDQHRGWFMSSLMISTAMNGKAPYKQVLTHGFTVDGQGRKMSKSVGNVISPQHVTNKLGADILRLWVAATDYSGEMTVSDQILNRSADAYRRIRNTARFLLANINGFDPVSDMVAIEDMVALDRWVVRRAAALQQELLEAYDEYNFHLVTQKLMQFCSVELGSFYLDIIKDRQYTAKGDSNARRSCQSALYLISEAMVRWIAPILSFTADEIWKLLPGERGEYVFTETWYEGLKSITLESDLSDEYWDQLLAVRAEVNKVIENARREKQIGGSLEAEVTLFADDALSAVLEKLGDELRFVLLTSKTEVVALAAAPSDAIGTELASLKLSLKKSEAEKCERCWHHREDVGTVTEHPTLCVRCVTNIEGDGEVRQFA</sequence>
<name>SYI_SHEHH</name>